<sequence>MDTSPYDFLKLYPWLSRGEADKGTLLDAFPGETFEQSLASDVAMRRAVQDDPAFGHQKLVETFLSEDTPYRELLLFHAPGTGKTCTVVSVAERAKEKGLTRGCIVLARGAALLRNFLHELVFNCGTGGRYIPEGYADMGDQERTRKMRKAVSSYYQFRTYETFAKSVATMSAEAIRARYDRFVIVMDEVHHLRSVQAEGVNTYSAISRFLRTVRGCVKMLLTGTPMTNEPGELADVLNLILPQDKTIRPEDGIFSNSGDLLKPDELAERVRGRVSYLKAARPDAGLTFAGEVLGGTGMTHLRLVRLEMSAFQSDAYASAWDQDAGDRNIFSNSRQCSLAVMPDRRWGSAAEARNPSQVRRMAGQNLAEYSVKYDYLVRVASSSPKTFAYCEYVNGSGLSLLSDILLANGWRRATGRETTPGKRFALLTASQKNIHKIVQRFNHEDNVDGAYISLLLGSRVVAEGLTFKEVRHTVILTPHWNYTETAQAIARSWRAGSHDRLKARGEAVAVTVHRLVAVPRGRDTPRSIDSDMYAVSEVKDKRIKAVERILMTSAADCSLLRSRNLYPSEFDGSRECEYGRCAYRCSNVSVEPGPLPALLGASAAEAVAQVRLDGGGDPAIMKVDMSTLWAEVTAGRRYVNRWGDGAVLRAEGGRLELSAPYGSSEEGRWGDFYKTRNLCYAKMDQDHLRADDLRDSLPQEVEELLTVSPVETIGETASAMPQEVATAILMACVQARADGKTLNVVRRDALLDFYKGFYAMGPSGWTVWLHARGANAKVYDGRRWNPADEDTLEFLAARSAKFTDTRIGYYGLYNPNLKDFCIRDVTQGKRDKVDLRKLTVGRRCVDWDQRTLVHIVARLMKIDGRRDFMPHATLREMRELAEQDPLHEPSDLTSKEACRRFLFWTQKGDNKFRRQDICKAMEKWFIENDLMEDNFDCGHQHKRRGKFA</sequence>
<evidence type="ECO:0000255" key="1">
    <source>
        <dbReference type="PROSITE-ProRule" id="PRU00541"/>
    </source>
</evidence>
<evidence type="ECO:0000255" key="2">
    <source>
        <dbReference type="PROSITE-ProRule" id="PRU00542"/>
    </source>
</evidence>
<protein>
    <recommendedName>
        <fullName>Putative helicase 009L</fullName>
        <ecNumber>3.6.4.-</ecNumber>
    </recommendedName>
</protein>
<feature type="chain" id="PRO_0000410580" description="Putative helicase 009L">
    <location>
        <begin position="1"/>
        <end position="948"/>
    </location>
</feature>
<feature type="domain" description="Helicase ATP-binding" evidence="1">
    <location>
        <begin position="64"/>
        <end position="243"/>
    </location>
</feature>
<feature type="domain" description="Helicase C-terminal" evidence="2">
    <location>
        <begin position="371"/>
        <end position="554"/>
    </location>
</feature>
<feature type="short sequence motif" description="DEAH box">
    <location>
        <begin position="187"/>
        <end position="190"/>
    </location>
</feature>
<feature type="binding site" evidence="1">
    <location>
        <begin position="77"/>
        <end position="84"/>
    </location>
    <ligand>
        <name>ATP</name>
        <dbReference type="ChEBI" id="CHEBI:30616"/>
    </ligand>
</feature>
<gene>
    <name type="ORF">FV3-009L</name>
</gene>
<accession>Q6GZW6</accession>
<name>009L_FRG3G</name>
<dbReference type="EC" id="3.6.4.-"/>
<dbReference type="EMBL" id="AY548484">
    <property type="protein sequence ID" value="AAT09668.1"/>
    <property type="molecule type" value="Genomic_DNA"/>
</dbReference>
<dbReference type="RefSeq" id="YP_031587.1">
    <property type="nucleotide sequence ID" value="NC_005946.1"/>
</dbReference>
<dbReference type="KEGG" id="vg:2947781"/>
<dbReference type="Proteomes" id="UP000008770">
    <property type="component" value="Segment"/>
</dbReference>
<dbReference type="GO" id="GO:0005524">
    <property type="term" value="F:ATP binding"/>
    <property type="evidence" value="ECO:0007669"/>
    <property type="project" value="UniProtKB-KW"/>
</dbReference>
<dbReference type="GO" id="GO:0003677">
    <property type="term" value="F:DNA binding"/>
    <property type="evidence" value="ECO:0007669"/>
    <property type="project" value="InterPro"/>
</dbReference>
<dbReference type="GO" id="GO:0004386">
    <property type="term" value="F:helicase activity"/>
    <property type="evidence" value="ECO:0007669"/>
    <property type="project" value="UniProtKB-KW"/>
</dbReference>
<dbReference type="GO" id="GO:0016787">
    <property type="term" value="F:hydrolase activity"/>
    <property type="evidence" value="ECO:0007669"/>
    <property type="project" value="UniProtKB-KW"/>
</dbReference>
<dbReference type="Gene3D" id="3.40.50.300">
    <property type="entry name" value="P-loop containing nucleotide triphosphate hydrolases"/>
    <property type="match status" value="1"/>
</dbReference>
<dbReference type="Gene3D" id="3.40.50.10810">
    <property type="entry name" value="Tandem AAA-ATPase domain"/>
    <property type="match status" value="1"/>
</dbReference>
<dbReference type="InterPro" id="IPR006935">
    <property type="entry name" value="Helicase/UvrB_N"/>
</dbReference>
<dbReference type="InterPro" id="IPR014001">
    <property type="entry name" value="Helicase_ATP-bd"/>
</dbReference>
<dbReference type="InterPro" id="IPR001650">
    <property type="entry name" value="Helicase_C-like"/>
</dbReference>
<dbReference type="InterPro" id="IPR027417">
    <property type="entry name" value="P-loop_NTPase"/>
</dbReference>
<dbReference type="InterPro" id="IPR038718">
    <property type="entry name" value="SNF2-like_sf"/>
</dbReference>
<dbReference type="InterPro" id="IPR050496">
    <property type="entry name" value="SNF2_RAD54_helicase_repair"/>
</dbReference>
<dbReference type="PANTHER" id="PTHR45629:SF7">
    <property type="entry name" value="DNA EXCISION REPAIR PROTEIN ERCC-6-RELATED"/>
    <property type="match status" value="1"/>
</dbReference>
<dbReference type="PANTHER" id="PTHR45629">
    <property type="entry name" value="SNF2/RAD54 FAMILY MEMBER"/>
    <property type="match status" value="1"/>
</dbReference>
<dbReference type="Pfam" id="PF00271">
    <property type="entry name" value="Helicase_C"/>
    <property type="match status" value="1"/>
</dbReference>
<dbReference type="Pfam" id="PF04851">
    <property type="entry name" value="ResIII"/>
    <property type="match status" value="1"/>
</dbReference>
<dbReference type="SMART" id="SM00487">
    <property type="entry name" value="DEXDc"/>
    <property type="match status" value="1"/>
</dbReference>
<dbReference type="SMART" id="SM00490">
    <property type="entry name" value="HELICc"/>
    <property type="match status" value="1"/>
</dbReference>
<dbReference type="SUPFAM" id="SSF52540">
    <property type="entry name" value="P-loop containing nucleoside triphosphate hydrolases"/>
    <property type="match status" value="2"/>
</dbReference>
<dbReference type="PROSITE" id="PS51192">
    <property type="entry name" value="HELICASE_ATP_BIND_1"/>
    <property type="match status" value="1"/>
</dbReference>
<dbReference type="PROSITE" id="PS51194">
    <property type="entry name" value="HELICASE_CTER"/>
    <property type="match status" value="1"/>
</dbReference>
<organism>
    <name type="scientific">Frog virus 3 (isolate Goorha)</name>
    <name type="common">FV-3</name>
    <dbReference type="NCBI Taxonomy" id="654924"/>
    <lineage>
        <taxon>Viruses</taxon>
        <taxon>Varidnaviria</taxon>
        <taxon>Bamfordvirae</taxon>
        <taxon>Nucleocytoviricota</taxon>
        <taxon>Megaviricetes</taxon>
        <taxon>Pimascovirales</taxon>
        <taxon>Iridoviridae</taxon>
        <taxon>Alphairidovirinae</taxon>
        <taxon>Ranavirus</taxon>
        <taxon>Frog virus 3</taxon>
    </lineage>
</organism>
<proteinExistence type="predicted"/>
<organismHost>
    <name type="scientific">Dryophytes versicolor</name>
    <name type="common">chameleon treefrog</name>
    <dbReference type="NCBI Taxonomy" id="30343"/>
</organismHost>
<organismHost>
    <name type="scientific">Lithobates pipiens</name>
    <name type="common">Northern leopard frog</name>
    <name type="synonym">Rana pipiens</name>
    <dbReference type="NCBI Taxonomy" id="8404"/>
</organismHost>
<organismHost>
    <name type="scientific">Lithobates sylvaticus</name>
    <name type="common">Wood frog</name>
    <name type="synonym">Rana sylvatica</name>
    <dbReference type="NCBI Taxonomy" id="45438"/>
</organismHost>
<organismHost>
    <name type="scientific">Notophthalmus viridescens</name>
    <name type="common">Eastern newt</name>
    <name type="synonym">Triturus viridescens</name>
    <dbReference type="NCBI Taxonomy" id="8316"/>
</organismHost>
<reference key="1">
    <citation type="journal article" date="2004" name="Virology">
        <title>Comparative genomic analyses of frog virus 3, type species of the genus Ranavirus (family Iridoviridae).</title>
        <authorList>
            <person name="Tan W.G."/>
            <person name="Barkman T.J."/>
            <person name="Gregory Chinchar V."/>
            <person name="Essani K."/>
        </authorList>
    </citation>
    <scope>NUCLEOTIDE SEQUENCE [LARGE SCALE GENOMIC DNA]</scope>
</reference>
<keyword id="KW-0067">ATP-binding</keyword>
<keyword id="KW-0347">Helicase</keyword>
<keyword id="KW-0378">Hydrolase</keyword>
<keyword id="KW-0547">Nucleotide-binding</keyword>
<keyword id="KW-1185">Reference proteome</keyword>